<dbReference type="EC" id="1.1.1.284"/>
<dbReference type="EC" id="1.1.1.1"/>
<dbReference type="EC" id="1.1.1.-"/>
<dbReference type="EMBL" id="CP000247">
    <property type="protein sequence ID" value="ABG68454.1"/>
    <property type="molecule type" value="Genomic_DNA"/>
</dbReference>
<dbReference type="RefSeq" id="WP_000842109.1">
    <property type="nucleotide sequence ID" value="NC_008253.1"/>
</dbReference>
<dbReference type="SMR" id="Q0TKS7"/>
<dbReference type="KEGG" id="ecp:ECP_0421"/>
<dbReference type="HOGENOM" id="CLU_026673_14_0_6"/>
<dbReference type="Proteomes" id="UP000009182">
    <property type="component" value="Chromosome"/>
</dbReference>
<dbReference type="GO" id="GO:0005829">
    <property type="term" value="C:cytosol"/>
    <property type="evidence" value="ECO:0007669"/>
    <property type="project" value="TreeGrafter"/>
</dbReference>
<dbReference type="GO" id="GO:0004022">
    <property type="term" value="F:alcohol dehydrogenase (NAD+) activity"/>
    <property type="evidence" value="ECO:0007669"/>
    <property type="project" value="UniProtKB-EC"/>
</dbReference>
<dbReference type="GO" id="GO:0106322">
    <property type="term" value="F:S-(hydroxymethyl)glutathione dehydrogenase (NAD+) activity"/>
    <property type="evidence" value="ECO:0007669"/>
    <property type="project" value="RHEA"/>
</dbReference>
<dbReference type="GO" id="GO:0106321">
    <property type="term" value="F:S-(hydroxymethyl)glutathione dehydrogenase (NADP+) activity"/>
    <property type="evidence" value="ECO:0007669"/>
    <property type="project" value="RHEA"/>
</dbReference>
<dbReference type="GO" id="GO:0080007">
    <property type="term" value="F:S-nitrosoglutathione reductase (NADH) activity"/>
    <property type="evidence" value="ECO:0007669"/>
    <property type="project" value="RHEA"/>
</dbReference>
<dbReference type="GO" id="GO:0008270">
    <property type="term" value="F:zinc ion binding"/>
    <property type="evidence" value="ECO:0007669"/>
    <property type="project" value="InterPro"/>
</dbReference>
<dbReference type="GO" id="GO:0046294">
    <property type="term" value="P:formaldehyde catabolic process"/>
    <property type="evidence" value="ECO:0007669"/>
    <property type="project" value="InterPro"/>
</dbReference>
<dbReference type="CDD" id="cd08300">
    <property type="entry name" value="alcohol_DH_class_III"/>
    <property type="match status" value="1"/>
</dbReference>
<dbReference type="FunFam" id="3.40.50.720:FF:000003">
    <property type="entry name" value="S-(hydroxymethyl)glutathione dehydrogenase"/>
    <property type="match status" value="1"/>
</dbReference>
<dbReference type="FunFam" id="3.90.180.10:FF:000001">
    <property type="entry name" value="S-(hydroxymethyl)glutathione dehydrogenase"/>
    <property type="match status" value="1"/>
</dbReference>
<dbReference type="Gene3D" id="3.90.180.10">
    <property type="entry name" value="Medium-chain alcohol dehydrogenases, catalytic domain"/>
    <property type="match status" value="1"/>
</dbReference>
<dbReference type="Gene3D" id="3.40.50.720">
    <property type="entry name" value="NAD(P)-binding Rossmann-like Domain"/>
    <property type="match status" value="1"/>
</dbReference>
<dbReference type="InterPro" id="IPR013149">
    <property type="entry name" value="ADH-like_C"/>
</dbReference>
<dbReference type="InterPro" id="IPR013154">
    <property type="entry name" value="ADH-like_N"/>
</dbReference>
<dbReference type="InterPro" id="IPR014183">
    <property type="entry name" value="ADH_3"/>
</dbReference>
<dbReference type="InterPro" id="IPR002328">
    <property type="entry name" value="ADH_Zn_CS"/>
</dbReference>
<dbReference type="InterPro" id="IPR011032">
    <property type="entry name" value="GroES-like_sf"/>
</dbReference>
<dbReference type="InterPro" id="IPR036291">
    <property type="entry name" value="NAD(P)-bd_dom_sf"/>
</dbReference>
<dbReference type="InterPro" id="IPR020843">
    <property type="entry name" value="PKS_ER"/>
</dbReference>
<dbReference type="NCBIfam" id="TIGR02818">
    <property type="entry name" value="adh_III_F_hyde"/>
    <property type="match status" value="1"/>
</dbReference>
<dbReference type="PANTHER" id="PTHR43880">
    <property type="entry name" value="ALCOHOL DEHYDROGENASE"/>
    <property type="match status" value="1"/>
</dbReference>
<dbReference type="PANTHER" id="PTHR43880:SF12">
    <property type="entry name" value="ALCOHOL DEHYDROGENASE CLASS-3"/>
    <property type="match status" value="1"/>
</dbReference>
<dbReference type="Pfam" id="PF08240">
    <property type="entry name" value="ADH_N"/>
    <property type="match status" value="1"/>
</dbReference>
<dbReference type="Pfam" id="PF00107">
    <property type="entry name" value="ADH_zinc_N"/>
    <property type="match status" value="1"/>
</dbReference>
<dbReference type="SMART" id="SM00829">
    <property type="entry name" value="PKS_ER"/>
    <property type="match status" value="1"/>
</dbReference>
<dbReference type="SUPFAM" id="SSF50129">
    <property type="entry name" value="GroES-like"/>
    <property type="match status" value="2"/>
</dbReference>
<dbReference type="SUPFAM" id="SSF51735">
    <property type="entry name" value="NAD(P)-binding Rossmann-fold domains"/>
    <property type="match status" value="1"/>
</dbReference>
<dbReference type="PROSITE" id="PS00059">
    <property type="entry name" value="ADH_ZINC"/>
    <property type="match status" value="1"/>
</dbReference>
<name>FRMA_ECOL5</name>
<comment type="function">
    <text evidence="2">Has high formaldehyde dehydrogenase activity in the presence of glutathione and catalyzes the oxidation of normal alcohols in a reaction that is not GSH-dependent. In addition, hemithiolacetals other than those formed from GSH, including omega-thiol fatty acids, also are substrates. Also acts as a S-nitroso-glutathione reductase by catalyzing the NADH-dependent reduction of S-nitrosoglutathione.</text>
</comment>
<comment type="catalytic activity">
    <reaction evidence="2">
        <text>S-(hydroxymethyl)glutathione + NADP(+) = S-formylglutathione + NADPH + H(+)</text>
        <dbReference type="Rhea" id="RHEA:19981"/>
        <dbReference type="ChEBI" id="CHEBI:15378"/>
        <dbReference type="ChEBI" id="CHEBI:57688"/>
        <dbReference type="ChEBI" id="CHEBI:57783"/>
        <dbReference type="ChEBI" id="CHEBI:58349"/>
        <dbReference type="ChEBI" id="CHEBI:58758"/>
        <dbReference type="EC" id="1.1.1.284"/>
    </reaction>
</comment>
<comment type="catalytic activity">
    <reaction evidence="2">
        <text>S-(hydroxymethyl)glutathione + NAD(+) = S-formylglutathione + NADH + H(+)</text>
        <dbReference type="Rhea" id="RHEA:19985"/>
        <dbReference type="ChEBI" id="CHEBI:15378"/>
        <dbReference type="ChEBI" id="CHEBI:57540"/>
        <dbReference type="ChEBI" id="CHEBI:57688"/>
        <dbReference type="ChEBI" id="CHEBI:57945"/>
        <dbReference type="ChEBI" id="CHEBI:58758"/>
        <dbReference type="EC" id="1.1.1.284"/>
    </reaction>
</comment>
<comment type="catalytic activity">
    <reaction evidence="2">
        <text>a primary alcohol + NAD(+) = an aldehyde + NADH + H(+)</text>
        <dbReference type="Rhea" id="RHEA:10736"/>
        <dbReference type="ChEBI" id="CHEBI:15378"/>
        <dbReference type="ChEBI" id="CHEBI:15734"/>
        <dbReference type="ChEBI" id="CHEBI:17478"/>
        <dbReference type="ChEBI" id="CHEBI:57540"/>
        <dbReference type="ChEBI" id="CHEBI:57945"/>
        <dbReference type="EC" id="1.1.1.1"/>
    </reaction>
</comment>
<comment type="catalytic activity">
    <reaction evidence="2">
        <text>a secondary alcohol + NAD(+) = a ketone + NADH + H(+)</text>
        <dbReference type="Rhea" id="RHEA:10740"/>
        <dbReference type="ChEBI" id="CHEBI:15378"/>
        <dbReference type="ChEBI" id="CHEBI:17087"/>
        <dbReference type="ChEBI" id="CHEBI:35681"/>
        <dbReference type="ChEBI" id="CHEBI:57540"/>
        <dbReference type="ChEBI" id="CHEBI:57945"/>
        <dbReference type="EC" id="1.1.1.1"/>
    </reaction>
</comment>
<comment type="catalytic activity">
    <reaction evidence="2">
        <text>S-nitrosoglutathione + NADH + H(+) = S-(hydroxysulfenamide)glutathione + NAD(+)</text>
        <dbReference type="Rhea" id="RHEA:78371"/>
        <dbReference type="ChEBI" id="CHEBI:15378"/>
        <dbReference type="ChEBI" id="CHEBI:57540"/>
        <dbReference type="ChEBI" id="CHEBI:57945"/>
        <dbReference type="ChEBI" id="CHEBI:145544"/>
        <dbReference type="ChEBI" id="CHEBI:229723"/>
    </reaction>
    <physiologicalReaction direction="left-to-right" evidence="2">
        <dbReference type="Rhea" id="RHEA:78372"/>
    </physiologicalReaction>
</comment>
<comment type="cofactor">
    <cofactor evidence="1">
        <name>Zn(2+)</name>
        <dbReference type="ChEBI" id="CHEBI:29105"/>
    </cofactor>
    <text evidence="1">Binds 2 Zn(2+) ions per subunit.</text>
</comment>
<comment type="subunit">
    <text evidence="2">Homodimer.</text>
</comment>
<comment type="subcellular location">
    <subcellularLocation>
        <location evidence="2">Cytoplasm</location>
    </subcellularLocation>
</comment>
<comment type="similarity">
    <text evidence="3">Belongs to the zinc-containing alcohol dehydrogenase family. Class-III subfamily.</text>
</comment>
<evidence type="ECO:0000250" key="1">
    <source>
        <dbReference type="UniProtKB" id="P11766"/>
    </source>
</evidence>
<evidence type="ECO:0000250" key="2">
    <source>
        <dbReference type="UniProtKB" id="P25437"/>
    </source>
</evidence>
<evidence type="ECO:0000305" key="3"/>
<feature type="chain" id="PRO_0000341290" description="S-(hydroxymethyl)glutathione dehydrogenase">
    <location>
        <begin position="1"/>
        <end position="369"/>
    </location>
</feature>
<feature type="binding site" evidence="1">
    <location>
        <position position="40"/>
    </location>
    <ligand>
        <name>Zn(2+)</name>
        <dbReference type="ChEBI" id="CHEBI:29105"/>
        <label>1</label>
        <note>catalytic</note>
    </ligand>
</feature>
<feature type="binding site" evidence="1">
    <location>
        <position position="62"/>
    </location>
    <ligand>
        <name>Zn(2+)</name>
        <dbReference type="ChEBI" id="CHEBI:29105"/>
        <label>1</label>
        <note>catalytic</note>
    </ligand>
</feature>
<feature type="binding site" evidence="1">
    <location>
        <position position="92"/>
    </location>
    <ligand>
        <name>Zn(2+)</name>
        <dbReference type="ChEBI" id="CHEBI:29105"/>
        <label>2</label>
    </ligand>
</feature>
<feature type="binding site" evidence="1">
    <location>
        <position position="95"/>
    </location>
    <ligand>
        <name>Zn(2+)</name>
        <dbReference type="ChEBI" id="CHEBI:29105"/>
        <label>2</label>
    </ligand>
</feature>
<feature type="binding site" evidence="1">
    <location>
        <position position="98"/>
    </location>
    <ligand>
        <name>Zn(2+)</name>
        <dbReference type="ChEBI" id="CHEBI:29105"/>
        <label>2</label>
    </ligand>
</feature>
<feature type="binding site" evidence="1">
    <location>
        <position position="106"/>
    </location>
    <ligand>
        <name>Zn(2+)</name>
        <dbReference type="ChEBI" id="CHEBI:29105"/>
        <label>2</label>
    </ligand>
</feature>
<feature type="binding site" evidence="1">
    <location>
        <position position="169"/>
    </location>
    <ligand>
        <name>Zn(2+)</name>
        <dbReference type="ChEBI" id="CHEBI:29105"/>
        <label>1</label>
        <note>catalytic</note>
    </ligand>
</feature>
<keyword id="KW-0963">Cytoplasm</keyword>
<keyword id="KW-0479">Metal-binding</keyword>
<keyword id="KW-0520">NAD</keyword>
<keyword id="KW-0560">Oxidoreductase</keyword>
<keyword id="KW-0862">Zinc</keyword>
<accession>Q0TKS7</accession>
<sequence length="369" mass="39347">MKSRAAVAFAPGKPLEIVEIDVAPPKKGEVLIKVTHTGVCHTDAFTLSGDDPEGVFPVVLGHEGAGVVVEVGEGVTSVKPGDHVIPLYTAECGECEFCRSGKTNLCVAVRETQGKGLMPDGTTRFSYNGQPLYHYMGCSTFSEYTVVAEVSLAKINPEANHEHVCLLGCGVTTGIGAVHNTAKVQPGDSVAVFGLGAIGLAVVQGARQAKAGRIIAIDTNPKKFELARRFGATDCINPNDYDKPIKDVLLDINKWGIDHTFECIGNVNVMRAALESAHRGWGQSVIIGVAGSGQEISTRPFQLVTGRVWKGSAFGGVKGRSQLPGMVEDAMKGDIDLEPFVTHTMSLDEINDAFDLMHEGKSIRTVIRY</sequence>
<gene>
    <name type="primary">frmA</name>
    <name type="ordered locus">ECP_0421</name>
</gene>
<reference key="1">
    <citation type="journal article" date="2006" name="Mol. Microbiol.">
        <title>Role of pathogenicity island-associated integrases in the genome plasticity of uropathogenic Escherichia coli strain 536.</title>
        <authorList>
            <person name="Hochhut B."/>
            <person name="Wilde C."/>
            <person name="Balling G."/>
            <person name="Middendorf B."/>
            <person name="Dobrindt U."/>
            <person name="Brzuszkiewicz E."/>
            <person name="Gottschalk G."/>
            <person name="Carniel E."/>
            <person name="Hacker J."/>
        </authorList>
    </citation>
    <scope>NUCLEOTIDE SEQUENCE [LARGE SCALE GENOMIC DNA]</scope>
    <source>
        <strain>536 / UPEC</strain>
    </source>
</reference>
<protein>
    <recommendedName>
        <fullName>S-(hydroxymethyl)glutathione dehydrogenase</fullName>
        <ecNumber>1.1.1.284</ecNumber>
    </recommendedName>
    <alternativeName>
        <fullName>Alcohol dehydrogenase class-3</fullName>
        <ecNumber>1.1.1.1</ecNumber>
    </alternativeName>
    <alternativeName>
        <fullName>Alcohol dehydrogenase class-III</fullName>
    </alternativeName>
    <alternativeName>
        <fullName>Glutathione-dependent formaldehyde dehydrogenase</fullName>
        <shortName>FALDH</shortName>
        <shortName>FDH</shortName>
        <shortName>GSH-FDH</shortName>
        <ecNumber>1.1.1.-</ecNumber>
    </alternativeName>
</protein>
<organism>
    <name type="scientific">Escherichia coli O6:K15:H31 (strain 536 / UPEC)</name>
    <dbReference type="NCBI Taxonomy" id="362663"/>
    <lineage>
        <taxon>Bacteria</taxon>
        <taxon>Pseudomonadati</taxon>
        <taxon>Pseudomonadota</taxon>
        <taxon>Gammaproteobacteria</taxon>
        <taxon>Enterobacterales</taxon>
        <taxon>Enterobacteriaceae</taxon>
        <taxon>Escherichia</taxon>
    </lineage>
</organism>
<proteinExistence type="inferred from homology"/>